<gene>
    <name type="primary">DAD1</name>
    <name type="synonym">DAD-1</name>
    <name type="ORF">OsI_015174</name>
</gene>
<feature type="chain" id="PRO_0000295012" description="Dolichyl-diphosphooligosaccharide--protein glycosyltransferase subunit DAD1">
    <location>
        <begin position="1"/>
        <end position="114"/>
    </location>
</feature>
<feature type="topological domain" description="Cytoplasmic" evidence="3">
    <location>
        <begin position="1"/>
        <end position="30"/>
    </location>
</feature>
<feature type="transmembrane region" description="Helical" evidence="3">
    <location>
        <begin position="31"/>
        <end position="51"/>
    </location>
</feature>
<feature type="topological domain" description="Lumenal" evidence="3">
    <location>
        <begin position="52"/>
        <end position="54"/>
    </location>
</feature>
<feature type="transmembrane region" description="Helical" evidence="3">
    <location>
        <begin position="55"/>
        <end position="75"/>
    </location>
</feature>
<feature type="topological domain" description="Cytoplasmic" evidence="3">
    <location>
        <begin position="76"/>
        <end position="93"/>
    </location>
</feature>
<feature type="transmembrane region" description="Helical" evidence="3">
    <location>
        <begin position="94"/>
        <end position="114"/>
    </location>
</feature>
<feature type="sequence conflict" description="In Ref. 2; AAP23065." evidence="4" ref="2">
    <original>G</original>
    <variation>E</variation>
    <location>
        <position position="48"/>
    </location>
</feature>
<feature type="sequence conflict" description="In Ref. 2; AAP23065." evidence="4" ref="2">
    <original>L</original>
    <variation>P</variation>
    <location>
        <position position="105"/>
    </location>
</feature>
<evidence type="ECO:0000250" key="1"/>
<evidence type="ECO:0000250" key="2">
    <source>
        <dbReference type="UniProtKB" id="P46964"/>
    </source>
</evidence>
<evidence type="ECO:0000255" key="3"/>
<evidence type="ECO:0000305" key="4"/>
<dbReference type="EMBL" id="CM000129">
    <property type="protein sequence ID" value="EAY93941.1"/>
    <property type="molecule type" value="Genomic_DNA"/>
</dbReference>
<dbReference type="EMBL" id="AY271663">
    <property type="protein sequence ID" value="AAP23065.1"/>
    <property type="molecule type" value="Genomic_DNA"/>
</dbReference>
<dbReference type="SMR" id="A2XSY1"/>
<dbReference type="STRING" id="39946.A2XSY1"/>
<dbReference type="EnsemblPlants" id="BGIOSGA016310-TA">
    <property type="protein sequence ID" value="BGIOSGA016310-PA"/>
    <property type="gene ID" value="BGIOSGA016310"/>
</dbReference>
<dbReference type="EnsemblPlants" id="OsGoSa_04g0011370.01">
    <property type="protein sequence ID" value="OsGoSa_04g0011370.01"/>
    <property type="gene ID" value="OsGoSa_04g0011370"/>
</dbReference>
<dbReference type="EnsemblPlants" id="OsIR64_04g0011090.01">
    <property type="protein sequence ID" value="OsIR64_04g0011090.01"/>
    <property type="gene ID" value="OsIR64_04g0011090"/>
</dbReference>
<dbReference type="EnsemblPlants" id="OsKYG_04g0011360.01">
    <property type="protein sequence ID" value="OsKYG_04g0011360.01"/>
    <property type="gene ID" value="OsKYG_04g0011360"/>
</dbReference>
<dbReference type="EnsemblPlants" id="OsLaMu_04g0012100.01">
    <property type="protein sequence ID" value="OsLaMu_04g0012100.01"/>
    <property type="gene ID" value="OsLaMu_04g0012100"/>
</dbReference>
<dbReference type="EnsemblPlants" id="OsLima_04g0011750.01">
    <property type="protein sequence ID" value="OsLima_04g0011750.01"/>
    <property type="gene ID" value="OsLima_04g0011750"/>
</dbReference>
<dbReference type="EnsemblPlants" id="OsLiXu_04g0011860.01">
    <property type="protein sequence ID" value="OsLiXu_04g0011860.01"/>
    <property type="gene ID" value="OsLiXu_04g0011860"/>
</dbReference>
<dbReference type="EnsemblPlants" id="OsMH63_04G012130_01">
    <property type="protein sequence ID" value="OsMH63_04G012130_01"/>
    <property type="gene ID" value="OsMH63_04G012130"/>
</dbReference>
<dbReference type="EnsemblPlants" id="OsPr106_04g0012170.01">
    <property type="protein sequence ID" value="OsPr106_04g0012170.01"/>
    <property type="gene ID" value="OsPr106_04g0012170"/>
</dbReference>
<dbReference type="EnsemblPlants" id="OsZS97_04G012300_01">
    <property type="protein sequence ID" value="OsZS97_04G012300_01"/>
    <property type="gene ID" value="OsZS97_04G012300"/>
</dbReference>
<dbReference type="Gramene" id="BGIOSGA016310-TA">
    <property type="protein sequence ID" value="BGIOSGA016310-PA"/>
    <property type="gene ID" value="BGIOSGA016310"/>
</dbReference>
<dbReference type="Gramene" id="OsGoSa_04g0011370.01">
    <property type="protein sequence ID" value="OsGoSa_04g0011370.01"/>
    <property type="gene ID" value="OsGoSa_04g0011370"/>
</dbReference>
<dbReference type="Gramene" id="OsIR64_04g0011090.01">
    <property type="protein sequence ID" value="OsIR64_04g0011090.01"/>
    <property type="gene ID" value="OsIR64_04g0011090"/>
</dbReference>
<dbReference type="Gramene" id="OsKYG_04g0011360.01">
    <property type="protein sequence ID" value="OsKYG_04g0011360.01"/>
    <property type="gene ID" value="OsKYG_04g0011360"/>
</dbReference>
<dbReference type="Gramene" id="OsLaMu_04g0012100.01">
    <property type="protein sequence ID" value="OsLaMu_04g0012100.01"/>
    <property type="gene ID" value="OsLaMu_04g0012100"/>
</dbReference>
<dbReference type="Gramene" id="OsLima_04g0011750.01">
    <property type="protein sequence ID" value="OsLima_04g0011750.01"/>
    <property type="gene ID" value="OsLima_04g0011750"/>
</dbReference>
<dbReference type="Gramene" id="OsLiXu_04g0011860.01">
    <property type="protein sequence ID" value="OsLiXu_04g0011860.01"/>
    <property type="gene ID" value="OsLiXu_04g0011860"/>
</dbReference>
<dbReference type="Gramene" id="OsMH63_04G012130_01">
    <property type="protein sequence ID" value="OsMH63_04G012130_01"/>
    <property type="gene ID" value="OsMH63_04G012130"/>
</dbReference>
<dbReference type="Gramene" id="OsPr106_04g0012170.01">
    <property type="protein sequence ID" value="OsPr106_04g0012170.01"/>
    <property type="gene ID" value="OsPr106_04g0012170"/>
</dbReference>
<dbReference type="Gramene" id="OsZS97_04G012300_01">
    <property type="protein sequence ID" value="OsZS97_04G012300_01"/>
    <property type="gene ID" value="OsZS97_04G012300"/>
</dbReference>
<dbReference type="HOGENOM" id="CLU_111220_2_1_1"/>
<dbReference type="OMA" id="HIILHIV"/>
<dbReference type="OrthoDB" id="445566at2759"/>
<dbReference type="UniPathway" id="UPA00378"/>
<dbReference type="Proteomes" id="UP000007015">
    <property type="component" value="Chromosome 4"/>
</dbReference>
<dbReference type="GO" id="GO:0008250">
    <property type="term" value="C:oligosaccharyltransferase complex"/>
    <property type="evidence" value="ECO:0007669"/>
    <property type="project" value="InterPro"/>
</dbReference>
<dbReference type="GO" id="GO:0006487">
    <property type="term" value="P:protein N-linked glycosylation"/>
    <property type="evidence" value="ECO:0007669"/>
    <property type="project" value="TreeGrafter"/>
</dbReference>
<dbReference type="InterPro" id="IPR003038">
    <property type="entry name" value="DAD/Ost2"/>
</dbReference>
<dbReference type="PANTHER" id="PTHR10705">
    <property type="entry name" value="DOLICHYL-DIPHOSPHOOLIGOSACCHARIDE--PROTEIN GLYCOSYLTRANSFERASE SUBUNIT DAD1"/>
    <property type="match status" value="1"/>
</dbReference>
<dbReference type="PANTHER" id="PTHR10705:SF0">
    <property type="entry name" value="DOLICHYL-DIPHOSPHOOLIGOSACCHARIDE--PROTEIN GLYCOSYLTRANSFERASE SUBUNIT DAD1"/>
    <property type="match status" value="1"/>
</dbReference>
<dbReference type="Pfam" id="PF02109">
    <property type="entry name" value="DAD"/>
    <property type="match status" value="1"/>
</dbReference>
<dbReference type="PIRSF" id="PIRSF005588">
    <property type="entry name" value="DAD"/>
    <property type="match status" value="1"/>
</dbReference>
<protein>
    <recommendedName>
        <fullName>Dolichyl-diphosphooligosaccharide--protein glycosyltransferase subunit DAD1</fullName>
        <shortName>Oligosaccharyl transferase subunit DAD1</shortName>
    </recommendedName>
    <alternativeName>
        <fullName>Defender against apoptotic death 1 protein</fullName>
    </alternativeName>
    <alternativeName>
        <fullName>Defender against cell death 1</fullName>
        <shortName>DAD-1</shortName>
    </alternativeName>
</protein>
<sequence>MPRATSDAKLLIQSLGKAYAATPTNLKIIDLYVVFAVATALIQVVYMGIVGSFPFNSFLSGVLSCIGTAVLAVCLRIQVNKDNKEFKDLPPERAFADFVLCNLVLHLVIMNFLG</sequence>
<organism>
    <name type="scientific">Oryza sativa subsp. indica</name>
    <name type="common">Rice</name>
    <dbReference type="NCBI Taxonomy" id="39946"/>
    <lineage>
        <taxon>Eukaryota</taxon>
        <taxon>Viridiplantae</taxon>
        <taxon>Streptophyta</taxon>
        <taxon>Embryophyta</taxon>
        <taxon>Tracheophyta</taxon>
        <taxon>Spermatophyta</taxon>
        <taxon>Magnoliopsida</taxon>
        <taxon>Liliopsida</taxon>
        <taxon>Poales</taxon>
        <taxon>Poaceae</taxon>
        <taxon>BOP clade</taxon>
        <taxon>Oryzoideae</taxon>
        <taxon>Oryzeae</taxon>
        <taxon>Oryzinae</taxon>
        <taxon>Oryza</taxon>
        <taxon>Oryza sativa</taxon>
    </lineage>
</organism>
<comment type="function">
    <text evidence="2">Subunit of the oligosaccharyl transferase (OST) complex that catalyzes the initial transfer of a defined glycan (Glc(3)Man(9)GlcNAc(2) in eukaryotes) from the lipid carrier dolichol-pyrophosphate to an asparagine residue within an Asn-X-Ser/Thr consensus motif in nascent polypeptide chains, the first step in protein N-glycosylation. N-glycosylation occurs cotranslationally and the complex associates with the Sec61 complex at the channel-forming translocon complex that mediates protein translocation across the endoplasmic reticulum (ER). All subunits are required for a maximal enzyme activity.</text>
</comment>
<comment type="pathway">
    <text>Protein modification; protein glycosylation.</text>
</comment>
<comment type="subunit">
    <text evidence="2">Component of the oligosaccharyltransferase (OST) complex.</text>
</comment>
<comment type="subcellular location">
    <subcellularLocation>
        <location evidence="1">Endoplasmic reticulum membrane</location>
        <topology evidence="1">Multi-pass membrane protein</topology>
    </subcellularLocation>
</comment>
<comment type="similarity">
    <text evidence="4">Belongs to the DAD/OST2 family.</text>
</comment>
<proteinExistence type="inferred from homology"/>
<name>DAD1_ORYSI</name>
<reference key="1">
    <citation type="journal article" date="2005" name="PLoS Biol.">
        <title>The genomes of Oryza sativa: a history of duplications.</title>
        <authorList>
            <person name="Yu J."/>
            <person name="Wang J."/>
            <person name="Lin W."/>
            <person name="Li S."/>
            <person name="Li H."/>
            <person name="Zhou J."/>
            <person name="Ni P."/>
            <person name="Dong W."/>
            <person name="Hu S."/>
            <person name="Zeng C."/>
            <person name="Zhang J."/>
            <person name="Zhang Y."/>
            <person name="Li R."/>
            <person name="Xu Z."/>
            <person name="Li S."/>
            <person name="Li X."/>
            <person name="Zheng H."/>
            <person name="Cong L."/>
            <person name="Lin L."/>
            <person name="Yin J."/>
            <person name="Geng J."/>
            <person name="Li G."/>
            <person name="Shi J."/>
            <person name="Liu J."/>
            <person name="Lv H."/>
            <person name="Li J."/>
            <person name="Wang J."/>
            <person name="Deng Y."/>
            <person name="Ran L."/>
            <person name="Shi X."/>
            <person name="Wang X."/>
            <person name="Wu Q."/>
            <person name="Li C."/>
            <person name="Ren X."/>
            <person name="Wang J."/>
            <person name="Wang X."/>
            <person name="Li D."/>
            <person name="Liu D."/>
            <person name="Zhang X."/>
            <person name="Ji Z."/>
            <person name="Zhao W."/>
            <person name="Sun Y."/>
            <person name="Zhang Z."/>
            <person name="Bao J."/>
            <person name="Han Y."/>
            <person name="Dong L."/>
            <person name="Ji J."/>
            <person name="Chen P."/>
            <person name="Wu S."/>
            <person name="Liu J."/>
            <person name="Xiao Y."/>
            <person name="Bu D."/>
            <person name="Tan J."/>
            <person name="Yang L."/>
            <person name="Ye C."/>
            <person name="Zhang J."/>
            <person name="Xu J."/>
            <person name="Zhou Y."/>
            <person name="Yu Y."/>
            <person name="Zhang B."/>
            <person name="Zhuang S."/>
            <person name="Wei H."/>
            <person name="Liu B."/>
            <person name="Lei M."/>
            <person name="Yu H."/>
            <person name="Li Y."/>
            <person name="Xu H."/>
            <person name="Wei S."/>
            <person name="He X."/>
            <person name="Fang L."/>
            <person name="Zhang Z."/>
            <person name="Zhang Y."/>
            <person name="Huang X."/>
            <person name="Su Z."/>
            <person name="Tong W."/>
            <person name="Li J."/>
            <person name="Tong Z."/>
            <person name="Li S."/>
            <person name="Ye J."/>
            <person name="Wang L."/>
            <person name="Fang L."/>
            <person name="Lei T."/>
            <person name="Chen C.-S."/>
            <person name="Chen H.-C."/>
            <person name="Xu Z."/>
            <person name="Li H."/>
            <person name="Huang H."/>
            <person name="Zhang F."/>
            <person name="Xu H."/>
            <person name="Li N."/>
            <person name="Zhao C."/>
            <person name="Li S."/>
            <person name="Dong L."/>
            <person name="Huang Y."/>
            <person name="Li L."/>
            <person name="Xi Y."/>
            <person name="Qi Q."/>
            <person name="Li W."/>
            <person name="Zhang B."/>
            <person name="Hu W."/>
            <person name="Zhang Y."/>
            <person name="Tian X."/>
            <person name="Jiao Y."/>
            <person name="Liang X."/>
            <person name="Jin J."/>
            <person name="Gao L."/>
            <person name="Zheng W."/>
            <person name="Hao B."/>
            <person name="Liu S.-M."/>
            <person name="Wang W."/>
            <person name="Yuan L."/>
            <person name="Cao M."/>
            <person name="McDermott J."/>
            <person name="Samudrala R."/>
            <person name="Wang J."/>
            <person name="Wong G.K.-S."/>
            <person name="Yang H."/>
        </authorList>
    </citation>
    <scope>NUCLEOTIDE SEQUENCE [LARGE SCALE GENOMIC DNA]</scope>
    <source>
        <strain>cv. 93-11</strain>
    </source>
</reference>
<reference key="2">
    <citation type="submission" date="2003-04" db="EMBL/GenBank/DDBJ databases">
        <title>Indica rice dad-1 gene.</title>
        <authorList>
            <person name="Chen W.-P."/>
            <person name="Li P.H."/>
        </authorList>
    </citation>
    <scope>NUCLEOTIDE SEQUENCE [GENOMIC DNA] OF 18-113</scope>
    <source>
        <strain>cv. Taichung native 1</strain>
    </source>
</reference>
<keyword id="KW-0053">Apoptosis</keyword>
<keyword id="KW-0256">Endoplasmic reticulum</keyword>
<keyword id="KW-0472">Membrane</keyword>
<keyword id="KW-1185">Reference proteome</keyword>
<keyword id="KW-0812">Transmembrane</keyword>
<keyword id="KW-1133">Transmembrane helix</keyword>
<accession>A2XSY1</accession>
<accession>O50070</accession>
<accession>Q7F9I2</accession>
<accession>Q84N35</accession>